<comment type="function">
    <text evidence="5">May be involved in the transcriptional activation of MDM2 and EP300 genes.</text>
</comment>
<comment type="interaction">
    <interactant intactId="EBI-2818641">
        <id>Q969J2</id>
    </interactant>
    <interactant intactId="EBI-10311131">
        <id>Q9NP86</id>
        <label>CABP5</label>
    </interactant>
    <organismsDiffer>false</organismsDiffer>
    <experiments>7</experiments>
</comment>
<comment type="interaction">
    <interactant intactId="EBI-2818641">
        <id>Q969J2</id>
    </interactant>
    <interactant intactId="EBI-465156">
        <id>Q9UBH0</id>
        <label>IL36RN</label>
    </interactant>
    <organismsDiffer>false</organismsDiffer>
    <experiments>3</experiments>
</comment>
<comment type="interaction">
    <interactant intactId="EBI-2818641">
        <id>Q969J2</id>
    </interactant>
    <interactant intactId="EBI-1044504">
        <id>Q9BS40</id>
        <label>LXN</label>
    </interactant>
    <organismsDiffer>false</organismsDiffer>
    <experiments>6</experiments>
</comment>
<comment type="interaction">
    <interactant intactId="EBI-2818641">
        <id>Q969J2</id>
    </interactant>
    <interactant intactId="EBI-16439278">
        <id>Q6FHY5</id>
        <label>MEOX2</label>
    </interactant>
    <organismsDiffer>false</organismsDiffer>
    <experiments>3</experiments>
</comment>
<comment type="interaction">
    <interactant intactId="EBI-2818641">
        <id>Q969J2</id>
    </interactant>
    <interactant intactId="EBI-9057006">
        <id>Q9UJX0</id>
        <label>OSGIN1</label>
    </interactant>
    <organismsDiffer>false</organismsDiffer>
    <experiments>3</experiments>
</comment>
<comment type="interaction">
    <interactant intactId="EBI-2818641">
        <id>Q969J2</id>
    </interactant>
    <interactant intactId="EBI-10290053">
        <id>Q96JS3</id>
        <label>PGBD1</label>
    </interactant>
    <organismsDiffer>false</organismsDiffer>
    <experiments>5</experiments>
</comment>
<comment type="interaction">
    <interactant intactId="EBI-2818641">
        <id>Q969J2</id>
    </interactant>
    <interactant intactId="EBI-357793">
        <id>P60900</id>
        <label>PSMA6</label>
    </interactant>
    <organismsDiffer>false</organismsDiffer>
    <experiments>3</experiments>
</comment>
<comment type="interaction">
    <interactant intactId="EBI-2818641">
        <id>Q969J2</id>
    </interactant>
    <interactant intactId="EBI-745846">
        <id>P57086</id>
        <label>SCAND1</label>
    </interactant>
    <organismsDiffer>false</organismsDiffer>
    <experiments>9</experiments>
</comment>
<comment type="interaction">
    <interactant intactId="EBI-2818641">
        <id>Q969J2</id>
    </interactant>
    <interactant intactId="EBI-739510">
        <id>Q9HCM9</id>
        <label>TRIM39</label>
    </interactant>
    <organismsDiffer>false</organismsDiffer>
    <experiments>3</experiments>
</comment>
<comment type="interaction">
    <interactant intactId="EBI-2818641">
        <id>Q969J2</id>
    </interactant>
    <interactant intactId="EBI-16431094">
        <id>A0A0S2Z6X0</id>
        <label>ZKSCAN4</label>
    </interactant>
    <organismsDiffer>false</organismsDiffer>
    <experiments>3</experiments>
</comment>
<comment type="interaction">
    <interactant intactId="EBI-2818641">
        <id>Q969J2</id>
    </interactant>
    <interactant intactId="EBI-2818641">
        <id>Q969J2</id>
        <label>ZKSCAN4</label>
    </interactant>
    <organismsDiffer>false</organismsDiffer>
    <experiments>4</experiments>
</comment>
<comment type="interaction">
    <interactant intactId="EBI-2818641">
        <id>Q969J2</id>
    </interactant>
    <interactant intactId="EBI-743851">
        <id>Q9P0L1</id>
        <label>ZKSCAN7</label>
    </interactant>
    <organismsDiffer>false</organismsDiffer>
    <experiments>4</experiments>
</comment>
<comment type="interaction">
    <interactant intactId="EBI-2818641">
        <id>Q969J2</id>
    </interactant>
    <interactant intactId="EBI-10698225">
        <id>Q9P0L1-2</id>
        <label>ZKSCAN7</label>
    </interactant>
    <organismsDiffer>false</organismsDiffer>
    <experiments>6</experiments>
</comment>
<comment type="interaction">
    <interactant intactId="EBI-2818641">
        <id>Q969J2</id>
    </interactant>
    <interactant intactId="EBI-707773">
        <id>P17028</id>
        <label>ZNF24</label>
    </interactant>
    <organismsDiffer>false</organismsDiffer>
    <experiments>7</experiments>
</comment>
<comment type="interaction">
    <interactant intactId="EBI-2818641">
        <id>Q969J2</id>
    </interactant>
    <interactant intactId="EBI-11524467">
        <id>Q8NF99-2</id>
        <label>ZNF397</label>
    </interactant>
    <organismsDiffer>false</organismsDiffer>
    <experiments>3</experiments>
</comment>
<comment type="interaction">
    <interactant intactId="EBI-2818641">
        <id>Q969J2</id>
    </interactant>
    <interactant intactId="EBI-740232">
        <id>Q9NWS9-2</id>
        <label>ZNF446</label>
    </interactant>
    <organismsDiffer>false</organismsDiffer>
    <experiments>9</experiments>
</comment>
<comment type="interaction">
    <interactant intactId="EBI-2818641">
        <id>Q969J2</id>
    </interactant>
    <interactant intactId="EBI-743906">
        <id>Q96IT1</id>
        <label>ZNF496</label>
    </interactant>
    <organismsDiffer>false</organismsDiffer>
    <experiments>10</experiments>
</comment>
<comment type="interaction">
    <interactant intactId="EBI-2818641">
        <id>Q969J2</id>
    </interactant>
    <interactant intactId="EBI-10281938">
        <id>Q9Y5A6</id>
        <label>ZSCAN21</label>
    </interactant>
    <organismsDiffer>false</organismsDiffer>
    <experiments>5</experiments>
</comment>
<comment type="interaction">
    <interactant intactId="EBI-2818641">
        <id>Q969J2</id>
    </interactant>
    <interactant intactId="EBI-10178224">
        <id>P10073</id>
        <label>ZSCAN22</label>
    </interactant>
    <organismsDiffer>false</organismsDiffer>
    <experiments>3</experiments>
</comment>
<comment type="interaction">
    <interactant intactId="EBI-2818641">
        <id>Q969J2</id>
    </interactant>
    <interactant intactId="EBI-11793064">
        <id>Q86W11</id>
        <label>ZSCAN30</label>
    </interactant>
    <organismsDiffer>false</organismsDiffer>
    <experiments>3</experiments>
</comment>
<comment type="interaction">
    <interactant intactId="EBI-2818641">
        <id>Q969J2</id>
    </interactant>
    <interactant intactId="EBI-739949">
        <id>Q9NX65</id>
        <label>ZSCAN32</label>
    </interactant>
    <organismsDiffer>false</organismsDiffer>
    <experiments>6</experiments>
</comment>
<comment type="subcellular location">
    <subcellularLocation>
        <location evidence="3 5">Nucleus</location>
    </subcellularLocation>
</comment>
<comment type="tissue specificity">
    <text evidence="5">Expressed in adult heart, brain, placenta, lung and kidney, but not in adult liver and skeletal muscle. In 17-day old embryo, detected in liver, skeletal muscle, brain, heart and small intestine.</text>
</comment>
<comment type="similarity">
    <text evidence="6">Belongs to the krueppel C2H2-type zinc-finger protein family.</text>
</comment>
<proteinExistence type="evidence at protein level"/>
<gene>
    <name type="primary">ZKSCAN4</name>
    <name type="synonym">ZNF307</name>
    <name type="synonym">ZNF427</name>
</gene>
<organism>
    <name type="scientific">Homo sapiens</name>
    <name type="common">Human</name>
    <dbReference type="NCBI Taxonomy" id="9606"/>
    <lineage>
        <taxon>Eukaryota</taxon>
        <taxon>Metazoa</taxon>
        <taxon>Chordata</taxon>
        <taxon>Craniata</taxon>
        <taxon>Vertebrata</taxon>
        <taxon>Euteleostomi</taxon>
        <taxon>Mammalia</taxon>
        <taxon>Eutheria</taxon>
        <taxon>Euarchontoglires</taxon>
        <taxon>Primates</taxon>
        <taxon>Haplorrhini</taxon>
        <taxon>Catarrhini</taxon>
        <taxon>Hominidae</taxon>
        <taxon>Homo</taxon>
    </lineage>
</organism>
<name>ZKSC4_HUMAN</name>
<dbReference type="EMBL" id="AY781778">
    <property type="protein sequence ID" value="AAV41023.1"/>
    <property type="molecule type" value="mRNA"/>
</dbReference>
<dbReference type="EMBL" id="AK315783">
    <property type="protein sequence ID" value="BAG38129.1"/>
    <property type="molecule type" value="mRNA"/>
</dbReference>
<dbReference type="EMBL" id="AL022393">
    <property type="status" value="NOT_ANNOTATED_CDS"/>
    <property type="molecule type" value="Genomic_DNA"/>
</dbReference>
<dbReference type="EMBL" id="CH471081">
    <property type="protein sequence ID" value="EAX03142.1"/>
    <property type="molecule type" value="Genomic_DNA"/>
</dbReference>
<dbReference type="EMBL" id="BC014031">
    <property type="protein sequence ID" value="AAH14031.1"/>
    <property type="molecule type" value="mRNA"/>
</dbReference>
<dbReference type="CCDS" id="CCDS4647.1"/>
<dbReference type="RefSeq" id="NP_061983.2">
    <property type="nucleotide sequence ID" value="NM_019110.4"/>
</dbReference>
<dbReference type="RefSeq" id="XP_005249152.1">
    <property type="nucleotide sequence ID" value="XM_005249095.4"/>
</dbReference>
<dbReference type="RefSeq" id="XP_054211362.1">
    <property type="nucleotide sequence ID" value="XM_054355387.1"/>
</dbReference>
<dbReference type="SMR" id="Q969J2"/>
<dbReference type="BioGRID" id="132179">
    <property type="interactions" value="80"/>
</dbReference>
<dbReference type="FunCoup" id="Q969J2">
    <property type="interactions" value="1009"/>
</dbReference>
<dbReference type="IntAct" id="Q969J2">
    <property type="interactions" value="84"/>
</dbReference>
<dbReference type="MINT" id="Q969J2"/>
<dbReference type="STRING" id="9606.ENSP00000366509"/>
<dbReference type="iPTMnet" id="Q969J2"/>
<dbReference type="PhosphoSitePlus" id="Q969J2"/>
<dbReference type="BioMuta" id="ZKSCAN4"/>
<dbReference type="DMDM" id="23396993"/>
<dbReference type="jPOST" id="Q969J2"/>
<dbReference type="MassIVE" id="Q969J2"/>
<dbReference type="PaxDb" id="9606-ENSP00000366509"/>
<dbReference type="PeptideAtlas" id="Q969J2"/>
<dbReference type="ProteomicsDB" id="75772"/>
<dbReference type="Pumba" id="Q969J2"/>
<dbReference type="ABCD" id="Q969J2">
    <property type="antibodies" value="1 sequenced antibody"/>
</dbReference>
<dbReference type="Antibodypedia" id="11231">
    <property type="antibodies" value="244 antibodies from 22 providers"/>
</dbReference>
<dbReference type="DNASU" id="387032"/>
<dbReference type="Ensembl" id="ENST00000377294.3">
    <property type="protein sequence ID" value="ENSP00000366509.2"/>
    <property type="gene ID" value="ENSG00000187626.9"/>
</dbReference>
<dbReference type="GeneID" id="387032"/>
<dbReference type="KEGG" id="hsa:387032"/>
<dbReference type="MANE-Select" id="ENST00000377294.3">
    <property type="protein sequence ID" value="ENSP00000366509.2"/>
    <property type="RefSeq nucleotide sequence ID" value="NM_019110.5"/>
    <property type="RefSeq protein sequence ID" value="NP_061983.2"/>
</dbReference>
<dbReference type="UCSC" id="uc003nks.2">
    <property type="organism name" value="human"/>
</dbReference>
<dbReference type="AGR" id="HGNC:13854"/>
<dbReference type="CTD" id="387032"/>
<dbReference type="DisGeNET" id="387032"/>
<dbReference type="GeneCards" id="ZKSCAN4"/>
<dbReference type="HGNC" id="HGNC:13854">
    <property type="gene designation" value="ZKSCAN4"/>
</dbReference>
<dbReference type="HPA" id="ENSG00000187626">
    <property type="expression patterns" value="Low tissue specificity"/>
</dbReference>
<dbReference type="MIM" id="611643">
    <property type="type" value="gene"/>
</dbReference>
<dbReference type="neXtProt" id="NX_Q969J2"/>
<dbReference type="OpenTargets" id="ENSG00000187626"/>
<dbReference type="PharmGKB" id="PA162409784"/>
<dbReference type="VEuPathDB" id="HostDB:ENSG00000187626"/>
<dbReference type="eggNOG" id="KOG1721">
    <property type="taxonomic scope" value="Eukaryota"/>
</dbReference>
<dbReference type="GeneTree" id="ENSGT00940000159644"/>
<dbReference type="HOGENOM" id="CLU_002678_49_4_1"/>
<dbReference type="InParanoid" id="Q969J2"/>
<dbReference type="OMA" id="KESQWEN"/>
<dbReference type="OrthoDB" id="654211at2759"/>
<dbReference type="PAN-GO" id="Q969J2">
    <property type="GO annotations" value="3 GO annotations based on evolutionary models"/>
</dbReference>
<dbReference type="PhylomeDB" id="Q969J2"/>
<dbReference type="TreeFam" id="TF350830"/>
<dbReference type="PathwayCommons" id="Q969J2"/>
<dbReference type="Reactome" id="R-HSA-212436">
    <property type="pathway name" value="Generic Transcription Pathway"/>
</dbReference>
<dbReference type="SignaLink" id="Q969J2"/>
<dbReference type="BioGRID-ORCS" id="387032">
    <property type="hits" value="16 hits in 1179 CRISPR screens"/>
</dbReference>
<dbReference type="GenomeRNAi" id="387032"/>
<dbReference type="Pharos" id="Q969J2">
    <property type="development level" value="Tbio"/>
</dbReference>
<dbReference type="PRO" id="PR:Q969J2"/>
<dbReference type="Proteomes" id="UP000005640">
    <property type="component" value="Chromosome 6"/>
</dbReference>
<dbReference type="RNAct" id="Q969J2">
    <property type="molecule type" value="protein"/>
</dbReference>
<dbReference type="Bgee" id="ENSG00000187626">
    <property type="expression patterns" value="Expressed in sperm and 155 other cell types or tissues"/>
</dbReference>
<dbReference type="ExpressionAtlas" id="Q969J2">
    <property type="expression patterns" value="baseline and differential"/>
</dbReference>
<dbReference type="GO" id="GO:0005654">
    <property type="term" value="C:nucleoplasm"/>
    <property type="evidence" value="ECO:0000314"/>
    <property type="project" value="HPA"/>
</dbReference>
<dbReference type="GO" id="GO:0000981">
    <property type="term" value="F:DNA-binding transcription factor activity, RNA polymerase II-specific"/>
    <property type="evidence" value="ECO:0000318"/>
    <property type="project" value="GO_Central"/>
</dbReference>
<dbReference type="GO" id="GO:0042802">
    <property type="term" value="F:identical protein binding"/>
    <property type="evidence" value="ECO:0000353"/>
    <property type="project" value="IntAct"/>
</dbReference>
<dbReference type="GO" id="GO:0000978">
    <property type="term" value="F:RNA polymerase II cis-regulatory region sequence-specific DNA binding"/>
    <property type="evidence" value="ECO:0000318"/>
    <property type="project" value="GO_Central"/>
</dbReference>
<dbReference type="GO" id="GO:0008270">
    <property type="term" value="F:zinc ion binding"/>
    <property type="evidence" value="ECO:0007669"/>
    <property type="project" value="UniProtKB-KW"/>
</dbReference>
<dbReference type="GO" id="GO:0006357">
    <property type="term" value="P:regulation of transcription by RNA polymerase II"/>
    <property type="evidence" value="ECO:0000318"/>
    <property type="project" value="GO_Central"/>
</dbReference>
<dbReference type="CDD" id="cd07765">
    <property type="entry name" value="KRAB_A-box"/>
    <property type="match status" value="1"/>
</dbReference>
<dbReference type="CDD" id="cd07936">
    <property type="entry name" value="SCAN"/>
    <property type="match status" value="1"/>
</dbReference>
<dbReference type="FunFam" id="3.30.160.60:FF:000295">
    <property type="entry name" value="zinc finger protein 19"/>
    <property type="match status" value="1"/>
</dbReference>
<dbReference type="FunFam" id="1.10.4020.10:FF:000001">
    <property type="entry name" value="zinc finger protein 263 isoform X1"/>
    <property type="match status" value="1"/>
</dbReference>
<dbReference type="FunFam" id="3.30.160.60:FF:001178">
    <property type="entry name" value="zinc finger protein 287"/>
    <property type="match status" value="1"/>
</dbReference>
<dbReference type="FunFam" id="3.30.160.60:FF:002254">
    <property type="entry name" value="Zinc finger protein 540"/>
    <property type="match status" value="1"/>
</dbReference>
<dbReference type="FunFam" id="3.30.160.60:FF:000642">
    <property type="entry name" value="Zinc finger with KRAB and SCAN domains 2"/>
    <property type="match status" value="1"/>
</dbReference>
<dbReference type="FunFam" id="3.30.160.60:FF:001214">
    <property type="entry name" value="Zinc finger with KRAB and SCAN domains 4"/>
    <property type="match status" value="1"/>
</dbReference>
<dbReference type="FunFam" id="3.30.160.60:FF:001333">
    <property type="entry name" value="Zinc finger with KRAB and SCAN domains 4"/>
    <property type="match status" value="1"/>
</dbReference>
<dbReference type="FunFam" id="3.30.160.60:FF:001518">
    <property type="entry name" value="Zinc finger with KRAB and SCAN domains 4"/>
    <property type="match status" value="1"/>
</dbReference>
<dbReference type="Gene3D" id="6.10.140.140">
    <property type="match status" value="1"/>
</dbReference>
<dbReference type="Gene3D" id="3.30.160.60">
    <property type="entry name" value="Classic Zinc Finger"/>
    <property type="match status" value="7"/>
</dbReference>
<dbReference type="Gene3D" id="1.10.4020.10">
    <property type="entry name" value="DNA breaking-rejoining enzymes"/>
    <property type="match status" value="1"/>
</dbReference>
<dbReference type="InterPro" id="IPR001909">
    <property type="entry name" value="KRAB"/>
</dbReference>
<dbReference type="InterPro" id="IPR036051">
    <property type="entry name" value="KRAB_dom_sf"/>
</dbReference>
<dbReference type="InterPro" id="IPR003309">
    <property type="entry name" value="SCAN_dom"/>
</dbReference>
<dbReference type="InterPro" id="IPR038269">
    <property type="entry name" value="SCAN_sf"/>
</dbReference>
<dbReference type="InterPro" id="IPR036236">
    <property type="entry name" value="Znf_C2H2_sf"/>
</dbReference>
<dbReference type="InterPro" id="IPR013087">
    <property type="entry name" value="Znf_C2H2_type"/>
</dbReference>
<dbReference type="PANTHER" id="PTHR24394">
    <property type="entry name" value="ZINC FINGER PROTEIN"/>
    <property type="match status" value="1"/>
</dbReference>
<dbReference type="PANTHER" id="PTHR24394:SF48">
    <property type="entry name" value="ZINC FINGER PROTEIN 771"/>
    <property type="match status" value="1"/>
</dbReference>
<dbReference type="Pfam" id="PF01352">
    <property type="entry name" value="KRAB"/>
    <property type="match status" value="1"/>
</dbReference>
<dbReference type="Pfam" id="PF02023">
    <property type="entry name" value="SCAN"/>
    <property type="match status" value="1"/>
</dbReference>
<dbReference type="Pfam" id="PF00096">
    <property type="entry name" value="zf-C2H2"/>
    <property type="match status" value="7"/>
</dbReference>
<dbReference type="SMART" id="SM00349">
    <property type="entry name" value="KRAB"/>
    <property type="match status" value="1"/>
</dbReference>
<dbReference type="SMART" id="SM00431">
    <property type="entry name" value="SCAN"/>
    <property type="match status" value="1"/>
</dbReference>
<dbReference type="SMART" id="SM00355">
    <property type="entry name" value="ZnF_C2H2"/>
    <property type="match status" value="7"/>
</dbReference>
<dbReference type="SUPFAM" id="SSF57667">
    <property type="entry name" value="beta-beta-alpha zinc fingers"/>
    <property type="match status" value="4"/>
</dbReference>
<dbReference type="SUPFAM" id="SSF109640">
    <property type="entry name" value="KRAB domain (Kruppel-associated box)"/>
    <property type="match status" value="1"/>
</dbReference>
<dbReference type="SUPFAM" id="SSF47353">
    <property type="entry name" value="Retrovirus capsid dimerization domain-like"/>
    <property type="match status" value="1"/>
</dbReference>
<dbReference type="PROSITE" id="PS50805">
    <property type="entry name" value="KRAB"/>
    <property type="match status" value="1"/>
</dbReference>
<dbReference type="PROSITE" id="PS50804">
    <property type="entry name" value="SCAN_BOX"/>
    <property type="match status" value="1"/>
</dbReference>
<dbReference type="PROSITE" id="PS00028">
    <property type="entry name" value="ZINC_FINGER_C2H2_1"/>
    <property type="match status" value="7"/>
</dbReference>
<dbReference type="PROSITE" id="PS50157">
    <property type="entry name" value="ZINC_FINGER_C2H2_2"/>
    <property type="match status" value="7"/>
</dbReference>
<feature type="chain" id="PRO_0000047525" description="Zinc finger protein with KRAB and SCAN domains 4">
    <location>
        <begin position="1"/>
        <end position="545"/>
    </location>
</feature>
<feature type="domain" description="SCAN box" evidence="3">
    <location>
        <begin position="53"/>
        <end position="135"/>
    </location>
</feature>
<feature type="domain" description="KRAB" evidence="2">
    <location>
        <begin position="221"/>
        <end position="317"/>
    </location>
</feature>
<feature type="zinc finger region" description="C2H2-type 1" evidence="1">
    <location>
        <begin position="320"/>
        <end position="342"/>
    </location>
</feature>
<feature type="zinc finger region" description="C2H2-type 2" evidence="1">
    <location>
        <begin position="348"/>
        <end position="370"/>
    </location>
</feature>
<feature type="zinc finger region" description="C2H2-type 3" evidence="1">
    <location>
        <begin position="376"/>
        <end position="398"/>
    </location>
</feature>
<feature type="zinc finger region" description="C2H2-type 4" evidence="1">
    <location>
        <begin position="404"/>
        <end position="426"/>
    </location>
</feature>
<feature type="zinc finger region" description="C2H2-type 5" evidence="1">
    <location>
        <begin position="432"/>
        <end position="454"/>
    </location>
</feature>
<feature type="zinc finger region" description="C2H2-type 6" evidence="1">
    <location>
        <begin position="487"/>
        <end position="509"/>
    </location>
</feature>
<feature type="zinc finger region" description="C2H2-type 7" evidence="1">
    <location>
        <begin position="515"/>
        <end position="537"/>
    </location>
</feature>
<feature type="region of interest" description="Disordered" evidence="4">
    <location>
        <begin position="1"/>
        <end position="22"/>
    </location>
</feature>
<feature type="region of interest" description="Disordered" evidence="4">
    <location>
        <begin position="34"/>
        <end position="55"/>
    </location>
</feature>
<feature type="region of interest" description="Disordered" evidence="4">
    <location>
        <begin position="455"/>
        <end position="480"/>
    </location>
</feature>
<feature type="compositionally biased region" description="Basic and acidic residues" evidence="4">
    <location>
        <begin position="455"/>
        <end position="467"/>
    </location>
</feature>
<feature type="compositionally biased region" description="Polar residues" evidence="4">
    <location>
        <begin position="468"/>
        <end position="480"/>
    </location>
</feature>
<feature type="cross-link" description="Glycyl lysine isopeptide (Lys-Gly) (interchain with G-Cter in SUMO2)" evidence="7 9 10">
    <location>
        <position position="26"/>
    </location>
</feature>
<feature type="cross-link" description="Glycyl lysine isopeptide (Lys-Gly) (interchain with G-Cter in SUMO2)" evidence="10">
    <location>
        <position position="29"/>
    </location>
</feature>
<feature type="cross-link" description="Glycyl lysine isopeptide (Lys-Gly) (interchain with G-Cter in SUMO2)" evidence="7 8 10">
    <location>
        <position position="178"/>
    </location>
</feature>
<feature type="cross-link" description="Glycyl lysine isopeptide (Lys-Gly) (interchain with G-Cter in SUMO2)" evidence="10">
    <location>
        <position position="222"/>
    </location>
</feature>
<feature type="sequence variant" id="VAR_059951" description="In dbSNP:rs9986596.">
    <original>S</original>
    <variation>F</variation>
    <location>
        <position position="33"/>
    </location>
</feature>
<accession>Q969J2</accession>
<accession>B2RE32</accession>
<accession>Q5U7L4</accession>
<protein>
    <recommendedName>
        <fullName>Zinc finger protein with KRAB and SCAN domains 4</fullName>
    </recommendedName>
    <alternativeName>
        <fullName>P373c6.1</fullName>
    </alternativeName>
    <alternativeName>
        <fullName>Zinc finger protein 307</fullName>
    </alternativeName>
    <alternativeName>
        <fullName>Zinc finger protein 427</fullName>
    </alternativeName>
</protein>
<evidence type="ECO:0000255" key="1">
    <source>
        <dbReference type="PROSITE-ProRule" id="PRU00042"/>
    </source>
</evidence>
<evidence type="ECO:0000255" key="2">
    <source>
        <dbReference type="PROSITE-ProRule" id="PRU00119"/>
    </source>
</evidence>
<evidence type="ECO:0000255" key="3">
    <source>
        <dbReference type="PROSITE-ProRule" id="PRU00187"/>
    </source>
</evidence>
<evidence type="ECO:0000256" key="4">
    <source>
        <dbReference type="SAM" id="MobiDB-lite"/>
    </source>
</evidence>
<evidence type="ECO:0000269" key="5">
    <source>
    </source>
</evidence>
<evidence type="ECO:0000305" key="6"/>
<evidence type="ECO:0007744" key="7">
    <source>
    </source>
</evidence>
<evidence type="ECO:0007744" key="8">
    <source>
    </source>
</evidence>
<evidence type="ECO:0007744" key="9">
    <source>
    </source>
</evidence>
<evidence type="ECO:0007744" key="10">
    <source>
    </source>
</evidence>
<keyword id="KW-0238">DNA-binding</keyword>
<keyword id="KW-1017">Isopeptide bond</keyword>
<keyword id="KW-0479">Metal-binding</keyword>
<keyword id="KW-0539">Nucleus</keyword>
<keyword id="KW-1267">Proteomics identification</keyword>
<keyword id="KW-1185">Reference proteome</keyword>
<keyword id="KW-0677">Repeat</keyword>
<keyword id="KW-0804">Transcription</keyword>
<keyword id="KW-0805">Transcription regulation</keyword>
<keyword id="KW-0832">Ubl conjugation</keyword>
<keyword id="KW-0862">Zinc</keyword>
<keyword id="KW-0863">Zinc-finger</keyword>
<reference key="1">
    <citation type="journal article" date="2007" name="Biochem. Biophys. Res. Commun.">
        <title>ZNF307, a novel zinc finger gene suppresses p53 and p21 pathway.</title>
        <authorList>
            <person name="Li J."/>
            <person name="Wang Y."/>
            <person name="Fan X."/>
            <person name="Mo X."/>
            <person name="Wang Z."/>
            <person name="Li Y."/>
            <person name="Yin Z."/>
            <person name="Deng Y."/>
            <person name="Luo N."/>
            <person name="Zhu C."/>
            <person name="Liu M."/>
            <person name="Ma Q."/>
            <person name="Ocorr K."/>
            <person name="Yuan W."/>
            <person name="Wu X."/>
        </authorList>
    </citation>
    <scope>NUCLEOTIDE SEQUENCE [MRNA]</scope>
    <scope>FUNCTION</scope>
    <scope>SUBCELLULAR LOCATION</scope>
    <scope>TISSUE SPECIFICITY</scope>
    <source>
        <tissue>Fetal heart</tissue>
    </source>
</reference>
<reference key="2">
    <citation type="journal article" date="2004" name="Nat. Genet.">
        <title>Complete sequencing and characterization of 21,243 full-length human cDNAs.</title>
        <authorList>
            <person name="Ota T."/>
            <person name="Suzuki Y."/>
            <person name="Nishikawa T."/>
            <person name="Otsuki T."/>
            <person name="Sugiyama T."/>
            <person name="Irie R."/>
            <person name="Wakamatsu A."/>
            <person name="Hayashi K."/>
            <person name="Sato H."/>
            <person name="Nagai K."/>
            <person name="Kimura K."/>
            <person name="Makita H."/>
            <person name="Sekine M."/>
            <person name="Obayashi M."/>
            <person name="Nishi T."/>
            <person name="Shibahara T."/>
            <person name="Tanaka T."/>
            <person name="Ishii S."/>
            <person name="Yamamoto J."/>
            <person name="Saito K."/>
            <person name="Kawai Y."/>
            <person name="Isono Y."/>
            <person name="Nakamura Y."/>
            <person name="Nagahari K."/>
            <person name="Murakami K."/>
            <person name="Yasuda T."/>
            <person name="Iwayanagi T."/>
            <person name="Wagatsuma M."/>
            <person name="Shiratori A."/>
            <person name="Sudo H."/>
            <person name="Hosoiri T."/>
            <person name="Kaku Y."/>
            <person name="Kodaira H."/>
            <person name="Kondo H."/>
            <person name="Sugawara M."/>
            <person name="Takahashi M."/>
            <person name="Kanda K."/>
            <person name="Yokoi T."/>
            <person name="Furuya T."/>
            <person name="Kikkawa E."/>
            <person name="Omura Y."/>
            <person name="Abe K."/>
            <person name="Kamihara K."/>
            <person name="Katsuta N."/>
            <person name="Sato K."/>
            <person name="Tanikawa M."/>
            <person name="Yamazaki M."/>
            <person name="Ninomiya K."/>
            <person name="Ishibashi T."/>
            <person name="Yamashita H."/>
            <person name="Murakawa K."/>
            <person name="Fujimori K."/>
            <person name="Tanai H."/>
            <person name="Kimata M."/>
            <person name="Watanabe M."/>
            <person name="Hiraoka S."/>
            <person name="Chiba Y."/>
            <person name="Ishida S."/>
            <person name="Ono Y."/>
            <person name="Takiguchi S."/>
            <person name="Watanabe S."/>
            <person name="Yosida M."/>
            <person name="Hotuta T."/>
            <person name="Kusano J."/>
            <person name="Kanehori K."/>
            <person name="Takahashi-Fujii A."/>
            <person name="Hara H."/>
            <person name="Tanase T.-O."/>
            <person name="Nomura Y."/>
            <person name="Togiya S."/>
            <person name="Komai F."/>
            <person name="Hara R."/>
            <person name="Takeuchi K."/>
            <person name="Arita M."/>
            <person name="Imose N."/>
            <person name="Musashino K."/>
            <person name="Yuuki H."/>
            <person name="Oshima A."/>
            <person name="Sasaki N."/>
            <person name="Aotsuka S."/>
            <person name="Yoshikawa Y."/>
            <person name="Matsunawa H."/>
            <person name="Ichihara T."/>
            <person name="Shiohata N."/>
            <person name="Sano S."/>
            <person name="Moriya S."/>
            <person name="Momiyama H."/>
            <person name="Satoh N."/>
            <person name="Takami S."/>
            <person name="Terashima Y."/>
            <person name="Suzuki O."/>
            <person name="Nakagawa S."/>
            <person name="Senoh A."/>
            <person name="Mizoguchi H."/>
            <person name="Goto Y."/>
            <person name="Shimizu F."/>
            <person name="Wakebe H."/>
            <person name="Hishigaki H."/>
            <person name="Watanabe T."/>
            <person name="Sugiyama A."/>
            <person name="Takemoto M."/>
            <person name="Kawakami B."/>
            <person name="Yamazaki M."/>
            <person name="Watanabe K."/>
            <person name="Kumagai A."/>
            <person name="Itakura S."/>
            <person name="Fukuzumi Y."/>
            <person name="Fujimori Y."/>
            <person name="Komiyama M."/>
            <person name="Tashiro H."/>
            <person name="Tanigami A."/>
            <person name="Fujiwara T."/>
            <person name="Ono T."/>
            <person name="Yamada K."/>
            <person name="Fujii Y."/>
            <person name="Ozaki K."/>
            <person name="Hirao M."/>
            <person name="Ohmori Y."/>
            <person name="Kawabata A."/>
            <person name="Hikiji T."/>
            <person name="Kobatake N."/>
            <person name="Inagaki H."/>
            <person name="Ikema Y."/>
            <person name="Okamoto S."/>
            <person name="Okitani R."/>
            <person name="Kawakami T."/>
            <person name="Noguchi S."/>
            <person name="Itoh T."/>
            <person name="Shigeta K."/>
            <person name="Senba T."/>
            <person name="Matsumura K."/>
            <person name="Nakajima Y."/>
            <person name="Mizuno T."/>
            <person name="Morinaga M."/>
            <person name="Sasaki M."/>
            <person name="Togashi T."/>
            <person name="Oyama M."/>
            <person name="Hata H."/>
            <person name="Watanabe M."/>
            <person name="Komatsu T."/>
            <person name="Mizushima-Sugano J."/>
            <person name="Satoh T."/>
            <person name="Shirai Y."/>
            <person name="Takahashi Y."/>
            <person name="Nakagawa K."/>
            <person name="Okumura K."/>
            <person name="Nagase T."/>
            <person name="Nomura N."/>
            <person name="Kikuchi H."/>
            <person name="Masuho Y."/>
            <person name="Yamashita R."/>
            <person name="Nakai K."/>
            <person name="Yada T."/>
            <person name="Nakamura Y."/>
            <person name="Ohara O."/>
            <person name="Isogai T."/>
            <person name="Sugano S."/>
        </authorList>
    </citation>
    <scope>NUCLEOTIDE SEQUENCE [LARGE SCALE MRNA]</scope>
    <source>
        <tissue>Trachea</tissue>
    </source>
</reference>
<reference key="3">
    <citation type="journal article" date="2003" name="Nature">
        <title>The DNA sequence and analysis of human chromosome 6.</title>
        <authorList>
            <person name="Mungall A.J."/>
            <person name="Palmer S.A."/>
            <person name="Sims S.K."/>
            <person name="Edwards C.A."/>
            <person name="Ashurst J.L."/>
            <person name="Wilming L."/>
            <person name="Jones M.C."/>
            <person name="Horton R."/>
            <person name="Hunt S.E."/>
            <person name="Scott C.E."/>
            <person name="Gilbert J.G.R."/>
            <person name="Clamp M.E."/>
            <person name="Bethel G."/>
            <person name="Milne S."/>
            <person name="Ainscough R."/>
            <person name="Almeida J.P."/>
            <person name="Ambrose K.D."/>
            <person name="Andrews T.D."/>
            <person name="Ashwell R.I.S."/>
            <person name="Babbage A.K."/>
            <person name="Bagguley C.L."/>
            <person name="Bailey J."/>
            <person name="Banerjee R."/>
            <person name="Barker D.J."/>
            <person name="Barlow K.F."/>
            <person name="Bates K."/>
            <person name="Beare D.M."/>
            <person name="Beasley H."/>
            <person name="Beasley O."/>
            <person name="Bird C.P."/>
            <person name="Blakey S.E."/>
            <person name="Bray-Allen S."/>
            <person name="Brook J."/>
            <person name="Brown A.J."/>
            <person name="Brown J.Y."/>
            <person name="Burford D.C."/>
            <person name="Burrill W."/>
            <person name="Burton J."/>
            <person name="Carder C."/>
            <person name="Carter N.P."/>
            <person name="Chapman J.C."/>
            <person name="Clark S.Y."/>
            <person name="Clark G."/>
            <person name="Clee C.M."/>
            <person name="Clegg S."/>
            <person name="Cobley V."/>
            <person name="Collier R.E."/>
            <person name="Collins J.E."/>
            <person name="Colman L.K."/>
            <person name="Corby N.R."/>
            <person name="Coville G.J."/>
            <person name="Culley K.M."/>
            <person name="Dhami P."/>
            <person name="Davies J."/>
            <person name="Dunn M."/>
            <person name="Earthrowl M.E."/>
            <person name="Ellington A.E."/>
            <person name="Evans K.A."/>
            <person name="Faulkner L."/>
            <person name="Francis M.D."/>
            <person name="Frankish A."/>
            <person name="Frankland J."/>
            <person name="French L."/>
            <person name="Garner P."/>
            <person name="Garnett J."/>
            <person name="Ghori M.J."/>
            <person name="Gilby L.M."/>
            <person name="Gillson C.J."/>
            <person name="Glithero R.J."/>
            <person name="Grafham D.V."/>
            <person name="Grant M."/>
            <person name="Gribble S."/>
            <person name="Griffiths C."/>
            <person name="Griffiths M.N.D."/>
            <person name="Hall R."/>
            <person name="Halls K.S."/>
            <person name="Hammond S."/>
            <person name="Harley J.L."/>
            <person name="Hart E.A."/>
            <person name="Heath P.D."/>
            <person name="Heathcott R."/>
            <person name="Holmes S.J."/>
            <person name="Howden P.J."/>
            <person name="Howe K.L."/>
            <person name="Howell G.R."/>
            <person name="Huckle E."/>
            <person name="Humphray S.J."/>
            <person name="Humphries M.D."/>
            <person name="Hunt A.R."/>
            <person name="Johnson C.M."/>
            <person name="Joy A.A."/>
            <person name="Kay M."/>
            <person name="Keenan S.J."/>
            <person name="Kimberley A.M."/>
            <person name="King A."/>
            <person name="Laird G.K."/>
            <person name="Langford C."/>
            <person name="Lawlor S."/>
            <person name="Leongamornlert D.A."/>
            <person name="Leversha M."/>
            <person name="Lloyd C.R."/>
            <person name="Lloyd D.M."/>
            <person name="Loveland J.E."/>
            <person name="Lovell J."/>
            <person name="Martin S."/>
            <person name="Mashreghi-Mohammadi M."/>
            <person name="Maslen G.L."/>
            <person name="Matthews L."/>
            <person name="McCann O.T."/>
            <person name="McLaren S.J."/>
            <person name="McLay K."/>
            <person name="McMurray A."/>
            <person name="Moore M.J.F."/>
            <person name="Mullikin J.C."/>
            <person name="Niblett D."/>
            <person name="Nickerson T."/>
            <person name="Novik K.L."/>
            <person name="Oliver K."/>
            <person name="Overton-Larty E.K."/>
            <person name="Parker A."/>
            <person name="Patel R."/>
            <person name="Pearce A.V."/>
            <person name="Peck A.I."/>
            <person name="Phillimore B.J.C.T."/>
            <person name="Phillips S."/>
            <person name="Plumb R.W."/>
            <person name="Porter K.M."/>
            <person name="Ramsey Y."/>
            <person name="Ranby S.A."/>
            <person name="Rice C.M."/>
            <person name="Ross M.T."/>
            <person name="Searle S.M."/>
            <person name="Sehra H.K."/>
            <person name="Sheridan E."/>
            <person name="Skuce C.D."/>
            <person name="Smith S."/>
            <person name="Smith M."/>
            <person name="Spraggon L."/>
            <person name="Squares S.L."/>
            <person name="Steward C.A."/>
            <person name="Sycamore N."/>
            <person name="Tamlyn-Hall G."/>
            <person name="Tester J."/>
            <person name="Theaker A.J."/>
            <person name="Thomas D.W."/>
            <person name="Thorpe A."/>
            <person name="Tracey A."/>
            <person name="Tromans A."/>
            <person name="Tubby B."/>
            <person name="Wall M."/>
            <person name="Wallis J.M."/>
            <person name="West A.P."/>
            <person name="White S.S."/>
            <person name="Whitehead S.L."/>
            <person name="Whittaker H."/>
            <person name="Wild A."/>
            <person name="Willey D.J."/>
            <person name="Wilmer T.E."/>
            <person name="Wood J.M."/>
            <person name="Wray P.W."/>
            <person name="Wyatt J.C."/>
            <person name="Young L."/>
            <person name="Younger R.M."/>
            <person name="Bentley D.R."/>
            <person name="Coulson A."/>
            <person name="Durbin R.M."/>
            <person name="Hubbard T."/>
            <person name="Sulston J.E."/>
            <person name="Dunham I."/>
            <person name="Rogers J."/>
            <person name="Beck S."/>
        </authorList>
    </citation>
    <scope>NUCLEOTIDE SEQUENCE [LARGE SCALE GENOMIC DNA]</scope>
</reference>
<reference key="4">
    <citation type="submission" date="2005-07" db="EMBL/GenBank/DDBJ databases">
        <authorList>
            <person name="Mural R.J."/>
            <person name="Istrail S."/>
            <person name="Sutton G.G."/>
            <person name="Florea L."/>
            <person name="Halpern A.L."/>
            <person name="Mobarry C.M."/>
            <person name="Lippert R."/>
            <person name="Walenz B."/>
            <person name="Shatkay H."/>
            <person name="Dew I."/>
            <person name="Miller J.R."/>
            <person name="Flanigan M.J."/>
            <person name="Edwards N.J."/>
            <person name="Bolanos R."/>
            <person name="Fasulo D."/>
            <person name="Halldorsson B.V."/>
            <person name="Hannenhalli S."/>
            <person name="Turner R."/>
            <person name="Yooseph S."/>
            <person name="Lu F."/>
            <person name="Nusskern D.R."/>
            <person name="Shue B.C."/>
            <person name="Zheng X.H."/>
            <person name="Zhong F."/>
            <person name="Delcher A.L."/>
            <person name="Huson D.H."/>
            <person name="Kravitz S.A."/>
            <person name="Mouchard L."/>
            <person name="Reinert K."/>
            <person name="Remington K.A."/>
            <person name="Clark A.G."/>
            <person name="Waterman M.S."/>
            <person name="Eichler E.E."/>
            <person name="Adams M.D."/>
            <person name="Hunkapiller M.W."/>
            <person name="Myers E.W."/>
            <person name="Venter J.C."/>
        </authorList>
    </citation>
    <scope>NUCLEOTIDE SEQUENCE [LARGE SCALE GENOMIC DNA]</scope>
</reference>
<reference key="5">
    <citation type="journal article" date="2004" name="Genome Res.">
        <title>The status, quality, and expansion of the NIH full-length cDNA project: the Mammalian Gene Collection (MGC).</title>
        <authorList>
            <consortium name="The MGC Project Team"/>
        </authorList>
    </citation>
    <scope>NUCLEOTIDE SEQUENCE [LARGE SCALE MRNA]</scope>
    <source>
        <tissue>B-cell</tissue>
    </source>
</reference>
<reference key="6">
    <citation type="journal article" date="2007" name="Science">
        <title>ATM and ATR substrate analysis reveals extensive protein networks responsive to DNA damage.</title>
        <authorList>
            <person name="Matsuoka S."/>
            <person name="Ballif B.A."/>
            <person name="Smogorzewska A."/>
            <person name="McDonald E.R. III"/>
            <person name="Hurov K.E."/>
            <person name="Luo J."/>
            <person name="Bakalarski C.E."/>
            <person name="Zhao Z."/>
            <person name="Solimini N."/>
            <person name="Lerenthal Y."/>
            <person name="Shiloh Y."/>
            <person name="Gygi S.P."/>
            <person name="Elledge S.J."/>
        </authorList>
    </citation>
    <scope>IDENTIFICATION BY MASS SPECTROMETRY [LARGE SCALE ANALYSIS]</scope>
    <source>
        <tissue>Embryonic kidney</tissue>
    </source>
</reference>
<reference key="7">
    <citation type="journal article" date="2014" name="Nat. Struct. Mol. Biol.">
        <title>Uncovering global SUMOylation signaling networks in a site-specific manner.</title>
        <authorList>
            <person name="Hendriks I.A."/>
            <person name="D'Souza R.C."/>
            <person name="Yang B."/>
            <person name="Verlaan-de Vries M."/>
            <person name="Mann M."/>
            <person name="Vertegaal A.C."/>
        </authorList>
    </citation>
    <scope>SUMOYLATION [LARGE SCALE ANALYSIS] AT LYS-26 AND LYS-178</scope>
    <scope>IDENTIFICATION BY MASS SPECTROMETRY [LARGE SCALE ANALYSIS]</scope>
</reference>
<reference key="8">
    <citation type="journal article" date="2015" name="Cell Rep.">
        <title>SUMO-2 orchestrates chromatin modifiers in response to DNA damage.</title>
        <authorList>
            <person name="Hendriks I.A."/>
            <person name="Treffers L.W."/>
            <person name="Verlaan-de Vries M."/>
            <person name="Olsen J.V."/>
            <person name="Vertegaal A.C."/>
        </authorList>
    </citation>
    <scope>SUMOYLATION [LARGE SCALE ANALYSIS] AT LYS-26</scope>
    <scope>IDENTIFICATION BY MASS SPECTROMETRY [LARGE SCALE ANALYSIS]</scope>
</reference>
<reference key="9">
    <citation type="journal article" date="2015" name="Mol. Cell. Proteomics">
        <title>System-wide analysis of SUMOylation dynamics in response to replication stress reveals novel small ubiquitin-like modified target proteins and acceptor lysines relevant for genome stability.</title>
        <authorList>
            <person name="Xiao Z."/>
            <person name="Chang J.G."/>
            <person name="Hendriks I.A."/>
            <person name="Sigurdsson J.O."/>
            <person name="Olsen J.V."/>
            <person name="Vertegaal A.C."/>
        </authorList>
    </citation>
    <scope>SUMOYLATION [LARGE SCALE ANALYSIS] AT LYS-178</scope>
    <scope>IDENTIFICATION BY MASS SPECTROMETRY [LARGE SCALE ANALYSIS]</scope>
</reference>
<reference key="10">
    <citation type="journal article" date="2017" name="Nat. Struct. Mol. Biol.">
        <title>Site-specific mapping of the human SUMO proteome reveals co-modification with phosphorylation.</title>
        <authorList>
            <person name="Hendriks I.A."/>
            <person name="Lyon D."/>
            <person name="Young C."/>
            <person name="Jensen L.J."/>
            <person name="Vertegaal A.C."/>
            <person name="Nielsen M.L."/>
        </authorList>
    </citation>
    <scope>SUMOYLATION [LARGE SCALE ANALYSIS] AT LYS-26; LYS-29; LYS-178 AND LYS-222</scope>
    <scope>IDENTIFICATION BY MASS SPECTROMETRY [LARGE SCALE ANALYSIS]</scope>
</reference>
<sequence length="545" mass="61579">MAREPRKNAALDAQSAEDQTGLLTVKVEKEEASALTAEVRAPCSPARGPERSRQRFRGFRYPEAAGPREALSRLRELCGQWLQPEMHSKEQILELLVLEQFLTILPGNLQSWVREQHPESGEEVVVLLEYLERQLDEPAPQVPVGDQGQELLCCKMALLTQTQGSQSSQCQPMKALFKHESLGSQPLHDRVLQVPGLAQGGCCREDAMVASRLTPGSQGLLKMEDVALTLTPGWTQLDSSQVNLYRDEKQENHSSLVSLGGEIQTKSRDLPPVKKLPEKEHGKICHLREDIAQIPTHAEAGEQEGRLQRKQKNAIGSRRHYCHECGKSFAQSSGLTKHRRIHTGEKPYECEDCGKTFIGSSALVIHQRVHTGEKPYECEECGKVFSHSSNLIKHQRTHTGEKPYECDDCGKTFSQSCSLLEHHKIHTGEKPYQCNMCGKAFRRNSHLLRHQRIHGDKNVQNPEHGESWESQGRTESQWENTEAPVSYKCNECERSFTRNRSLIEHQKIHTGEKPYQCDTCGKGFTRTSYLVQHQRSHVGKKTLSQ</sequence>